<evidence type="ECO:0000255" key="1">
    <source>
        <dbReference type="HAMAP-Rule" id="MF_00974"/>
    </source>
</evidence>
<name>DNAG_CHLMU</name>
<organism>
    <name type="scientific">Chlamydia muridarum (strain MoPn / Nigg)</name>
    <dbReference type="NCBI Taxonomy" id="243161"/>
    <lineage>
        <taxon>Bacteria</taxon>
        <taxon>Pseudomonadati</taxon>
        <taxon>Chlamydiota</taxon>
        <taxon>Chlamydiia</taxon>
        <taxon>Chlamydiales</taxon>
        <taxon>Chlamydiaceae</taxon>
        <taxon>Chlamydia/Chlamydophila group</taxon>
        <taxon>Chlamydia</taxon>
    </lineage>
</organism>
<reference key="1">
    <citation type="journal article" date="2000" name="Nucleic Acids Res.">
        <title>Genome sequences of Chlamydia trachomatis MoPn and Chlamydia pneumoniae AR39.</title>
        <authorList>
            <person name="Read T.D."/>
            <person name="Brunham R.C."/>
            <person name="Shen C."/>
            <person name="Gill S.R."/>
            <person name="Heidelberg J.F."/>
            <person name="White O."/>
            <person name="Hickey E.K."/>
            <person name="Peterson J.D."/>
            <person name="Utterback T.R."/>
            <person name="Berry K.J."/>
            <person name="Bass S."/>
            <person name="Linher K.D."/>
            <person name="Weidman J.F."/>
            <person name="Khouri H.M."/>
            <person name="Craven B."/>
            <person name="Bowman C."/>
            <person name="Dodson R.J."/>
            <person name="Gwinn M.L."/>
            <person name="Nelson W.C."/>
            <person name="DeBoy R.T."/>
            <person name="Kolonay J.F."/>
            <person name="McClarty G."/>
            <person name="Salzberg S.L."/>
            <person name="Eisen J.A."/>
            <person name="Fraser C.M."/>
        </authorList>
    </citation>
    <scope>NUCLEOTIDE SEQUENCE [LARGE SCALE GENOMIC DNA]</scope>
    <source>
        <strain>MoPn / Nigg</strain>
    </source>
</reference>
<dbReference type="EC" id="2.7.7.101" evidence="1"/>
<dbReference type="EMBL" id="AE002160">
    <property type="protein sequence ID" value="AAF39049.1"/>
    <property type="molecule type" value="Genomic_DNA"/>
</dbReference>
<dbReference type="PIR" id="H81733">
    <property type="entry name" value="H81733"/>
</dbReference>
<dbReference type="RefSeq" id="WP_010229712.1">
    <property type="nucleotide sequence ID" value="NZ_CP063055.1"/>
</dbReference>
<dbReference type="SMR" id="Q9PLC9"/>
<dbReference type="GeneID" id="1246300"/>
<dbReference type="KEGG" id="cmu:TC_0175"/>
<dbReference type="eggNOG" id="COG0358">
    <property type="taxonomic scope" value="Bacteria"/>
</dbReference>
<dbReference type="HOGENOM" id="CLU_013501_3_3_0"/>
<dbReference type="OrthoDB" id="9803773at2"/>
<dbReference type="Proteomes" id="UP000000800">
    <property type="component" value="Chromosome"/>
</dbReference>
<dbReference type="GO" id="GO:0005737">
    <property type="term" value="C:cytoplasm"/>
    <property type="evidence" value="ECO:0007669"/>
    <property type="project" value="TreeGrafter"/>
</dbReference>
<dbReference type="GO" id="GO:0000428">
    <property type="term" value="C:DNA-directed RNA polymerase complex"/>
    <property type="evidence" value="ECO:0007669"/>
    <property type="project" value="UniProtKB-KW"/>
</dbReference>
<dbReference type="GO" id="GO:1990077">
    <property type="term" value="C:primosome complex"/>
    <property type="evidence" value="ECO:0007669"/>
    <property type="project" value="UniProtKB-KW"/>
</dbReference>
<dbReference type="GO" id="GO:0003677">
    <property type="term" value="F:DNA binding"/>
    <property type="evidence" value="ECO:0007669"/>
    <property type="project" value="UniProtKB-KW"/>
</dbReference>
<dbReference type="GO" id="GO:0003899">
    <property type="term" value="F:DNA-directed RNA polymerase activity"/>
    <property type="evidence" value="ECO:0007669"/>
    <property type="project" value="InterPro"/>
</dbReference>
<dbReference type="GO" id="GO:0008270">
    <property type="term" value="F:zinc ion binding"/>
    <property type="evidence" value="ECO:0007669"/>
    <property type="project" value="UniProtKB-UniRule"/>
</dbReference>
<dbReference type="GO" id="GO:0006269">
    <property type="term" value="P:DNA replication, synthesis of primer"/>
    <property type="evidence" value="ECO:0007669"/>
    <property type="project" value="UniProtKB-UniRule"/>
</dbReference>
<dbReference type="CDD" id="cd03364">
    <property type="entry name" value="TOPRIM_DnaG_primases"/>
    <property type="match status" value="1"/>
</dbReference>
<dbReference type="FunFam" id="3.90.580.10:FF:000001">
    <property type="entry name" value="DNA primase"/>
    <property type="match status" value="1"/>
</dbReference>
<dbReference type="Gene3D" id="3.40.1360.10">
    <property type="match status" value="1"/>
</dbReference>
<dbReference type="Gene3D" id="3.90.980.10">
    <property type="entry name" value="DNA primase, catalytic core, N-terminal domain"/>
    <property type="match status" value="1"/>
</dbReference>
<dbReference type="Gene3D" id="3.90.580.10">
    <property type="entry name" value="Zinc finger, CHC2-type domain"/>
    <property type="match status" value="1"/>
</dbReference>
<dbReference type="HAMAP" id="MF_00974">
    <property type="entry name" value="DNA_primase_DnaG"/>
    <property type="match status" value="1"/>
</dbReference>
<dbReference type="InterPro" id="IPR037068">
    <property type="entry name" value="DNA_primase_core_N_sf"/>
</dbReference>
<dbReference type="InterPro" id="IPR006295">
    <property type="entry name" value="DNA_primase_DnaG"/>
</dbReference>
<dbReference type="InterPro" id="IPR036977">
    <property type="entry name" value="DNA_primase_Znf_CHC2"/>
</dbReference>
<dbReference type="InterPro" id="IPR030846">
    <property type="entry name" value="DnaG_bac"/>
</dbReference>
<dbReference type="InterPro" id="IPR013264">
    <property type="entry name" value="DNAG_N"/>
</dbReference>
<dbReference type="InterPro" id="IPR050219">
    <property type="entry name" value="DnaG_primase"/>
</dbReference>
<dbReference type="InterPro" id="IPR034151">
    <property type="entry name" value="TOPRIM_DnaG_bac"/>
</dbReference>
<dbReference type="InterPro" id="IPR006171">
    <property type="entry name" value="TOPRIM_dom"/>
</dbReference>
<dbReference type="InterPro" id="IPR002694">
    <property type="entry name" value="Znf_CHC2"/>
</dbReference>
<dbReference type="NCBIfam" id="TIGR01391">
    <property type="entry name" value="dnaG"/>
    <property type="match status" value="1"/>
</dbReference>
<dbReference type="PANTHER" id="PTHR30313">
    <property type="entry name" value="DNA PRIMASE"/>
    <property type="match status" value="1"/>
</dbReference>
<dbReference type="PANTHER" id="PTHR30313:SF2">
    <property type="entry name" value="DNA PRIMASE"/>
    <property type="match status" value="1"/>
</dbReference>
<dbReference type="Pfam" id="PF08275">
    <property type="entry name" value="DNAG_N"/>
    <property type="match status" value="1"/>
</dbReference>
<dbReference type="Pfam" id="PF13155">
    <property type="entry name" value="Toprim_2"/>
    <property type="match status" value="1"/>
</dbReference>
<dbReference type="Pfam" id="PF01807">
    <property type="entry name" value="Zn_ribbon_DnaG"/>
    <property type="match status" value="1"/>
</dbReference>
<dbReference type="PIRSF" id="PIRSF002811">
    <property type="entry name" value="DnaG"/>
    <property type="match status" value="1"/>
</dbReference>
<dbReference type="SMART" id="SM00493">
    <property type="entry name" value="TOPRIM"/>
    <property type="match status" value="1"/>
</dbReference>
<dbReference type="SMART" id="SM00400">
    <property type="entry name" value="ZnF_CHCC"/>
    <property type="match status" value="1"/>
</dbReference>
<dbReference type="SUPFAM" id="SSF56731">
    <property type="entry name" value="DNA primase core"/>
    <property type="match status" value="1"/>
</dbReference>
<dbReference type="SUPFAM" id="SSF57783">
    <property type="entry name" value="Zinc beta-ribbon"/>
    <property type="match status" value="1"/>
</dbReference>
<dbReference type="PROSITE" id="PS50880">
    <property type="entry name" value="TOPRIM"/>
    <property type="match status" value="1"/>
</dbReference>
<proteinExistence type="inferred from homology"/>
<gene>
    <name evidence="1" type="primary">dnaG</name>
    <name type="ordered locus">TC_0175</name>
</gene>
<comment type="function">
    <text evidence="1">RNA polymerase that catalyzes the synthesis of short RNA molecules used as primers for DNA polymerase during DNA replication.</text>
</comment>
<comment type="catalytic activity">
    <reaction evidence="1">
        <text>ssDNA + n NTP = ssDNA/pppN(pN)n-1 hybrid + (n-1) diphosphate.</text>
        <dbReference type="EC" id="2.7.7.101"/>
    </reaction>
</comment>
<comment type="cofactor">
    <cofactor evidence="1">
        <name>Zn(2+)</name>
        <dbReference type="ChEBI" id="CHEBI:29105"/>
    </cofactor>
    <text evidence="1">Binds 1 zinc ion per monomer.</text>
</comment>
<comment type="cofactor">
    <cofactor evidence="1">
        <name>Mg(2+)</name>
        <dbReference type="ChEBI" id="CHEBI:18420"/>
    </cofactor>
    <text evidence="1">Binds two Mg(2+) per subunit.</text>
</comment>
<comment type="subunit">
    <text evidence="1">Monomer. Interacts with DnaB.</text>
</comment>
<comment type="domain">
    <text evidence="1">Contains an N-terminal zinc-binding domain, a central core domain that contains the primase activity, and a C-terminal DnaB-binding domain.</text>
</comment>
<comment type="similarity">
    <text evidence="1">Belongs to the DnaG primase family.</text>
</comment>
<accession>Q9PLC9</accession>
<feature type="chain" id="PRO_0000180485" description="DNA primase">
    <location>
        <begin position="1"/>
        <end position="600"/>
    </location>
</feature>
<feature type="domain" description="Toprim" evidence="1">
    <location>
        <begin position="253"/>
        <end position="333"/>
    </location>
</feature>
<feature type="zinc finger region" description="CHC2-type" evidence="1">
    <location>
        <begin position="38"/>
        <end position="62"/>
    </location>
</feature>
<feature type="binding site" evidence="1">
    <location>
        <position position="259"/>
    </location>
    <ligand>
        <name>Mg(2+)</name>
        <dbReference type="ChEBI" id="CHEBI:18420"/>
        <label>1</label>
        <note>catalytic</note>
    </ligand>
</feature>
<feature type="binding site" evidence="1">
    <location>
        <position position="304"/>
    </location>
    <ligand>
        <name>Mg(2+)</name>
        <dbReference type="ChEBI" id="CHEBI:18420"/>
        <label>1</label>
        <note>catalytic</note>
    </ligand>
</feature>
<feature type="binding site" evidence="1">
    <location>
        <position position="304"/>
    </location>
    <ligand>
        <name>Mg(2+)</name>
        <dbReference type="ChEBI" id="CHEBI:18420"/>
        <label>2</label>
    </ligand>
</feature>
<feature type="binding site" evidence="1">
    <location>
        <position position="306"/>
    </location>
    <ligand>
        <name>Mg(2+)</name>
        <dbReference type="ChEBI" id="CHEBI:18420"/>
        <label>2</label>
    </ligand>
</feature>
<keyword id="KW-0235">DNA replication</keyword>
<keyword id="KW-0238">DNA-binding</keyword>
<keyword id="KW-0240">DNA-directed RNA polymerase</keyword>
<keyword id="KW-0460">Magnesium</keyword>
<keyword id="KW-0479">Metal-binding</keyword>
<keyword id="KW-0548">Nucleotidyltransferase</keyword>
<keyword id="KW-0639">Primosome</keyword>
<keyword id="KW-0804">Transcription</keyword>
<keyword id="KW-0808">Transferase</keyword>
<keyword id="KW-0862">Zinc</keyword>
<keyword id="KW-0863">Zinc-finger</keyword>
<sequence>MYYTEESLETLKHSIDIVSVLGEYVHLKRSGADYKACCPFHDEKTPSFIVYPTRGHYHCYGCGEHGDAINFLMKQQGYSFSEAVLFLAKKFHVDLVIKTKTKESSGQDSKECLRRINKEAERFFQYCLLCLPEGGEALSYLYKRGFSLDTIDRFQIGYAPEQRVFVRAMEERGISVKQLEWAGYLSKDWFLFAQRIMFPIQDSLGYTIGFSSRRFKEGGKGGKYINSPETLLFKKSRVLYGLQFSRKRIAKEKRVILVEGQADCLQMIDFGFNCTLAAQGTSFTETHVKELVKLGVSKAYLLFDGDAAGEKASLRVGDLCQVAGIAVIVCRLPSGQDPDSFLMQRGPEELRELLDRGEDYLSFLVWHKIRSYEQFTPREKARVVEEVIQQVQHWGSPIMIHEYLRQLASLVKVPEAAVLSYLSSIKSATEDKGKKADAKEVCPDPEATAVAYKGGKASKKISPRMILEADVIRCLLFAKPEEEFVPATVRHYLSPEEFHCIEYRSIFVMAMNHYNEKHMLPSMDDMMALVWGTEAMTLLVDRRINTELMRDIVVQAIQKLLDKHWRDRKRNFCHQMGKELDSLQEYVRLSEERIKVSLVS</sequence>
<protein>
    <recommendedName>
        <fullName evidence="1">DNA primase</fullName>
        <ecNumber evidence="1">2.7.7.101</ecNumber>
    </recommendedName>
</protein>